<accession>A2S9D4</accession>
<name>RISB_BURM9</name>
<proteinExistence type="inferred from homology"/>
<sequence length="173" mass="18810">MEIGQYQPNLEGDGLRIGIVQSRFNEPVCNGLADACVEELERLGVSGEDVLLVTVPGALEIPLALQKLAESNQFDALIALGAVIRGETYHFELVSNESGAGITRIALDFNTPIANAVLTTETDEQAIARMTEKGRDAARVAVEMANLTMTLDQLSDDEEDEEDEDDEDEEERA</sequence>
<evidence type="ECO:0000255" key="1">
    <source>
        <dbReference type="HAMAP-Rule" id="MF_00178"/>
    </source>
</evidence>
<evidence type="ECO:0000256" key="2">
    <source>
        <dbReference type="SAM" id="MobiDB-lite"/>
    </source>
</evidence>
<protein>
    <recommendedName>
        <fullName evidence="1">6,7-dimethyl-8-ribityllumazine synthase</fullName>
        <shortName evidence="1">DMRL synthase</shortName>
        <shortName evidence="1">LS</shortName>
        <shortName evidence="1">Lumazine synthase</shortName>
        <ecNumber evidence="1">2.5.1.78</ecNumber>
    </recommendedName>
</protein>
<feature type="chain" id="PRO_1000040380" description="6,7-dimethyl-8-ribityllumazine synthase">
    <location>
        <begin position="1"/>
        <end position="173"/>
    </location>
</feature>
<feature type="region of interest" description="Disordered" evidence="2">
    <location>
        <begin position="150"/>
        <end position="173"/>
    </location>
</feature>
<feature type="compositionally biased region" description="Acidic residues" evidence="2">
    <location>
        <begin position="154"/>
        <end position="173"/>
    </location>
</feature>
<feature type="active site" description="Proton donor" evidence="1">
    <location>
        <position position="90"/>
    </location>
</feature>
<feature type="binding site" evidence="1">
    <location>
        <position position="24"/>
    </location>
    <ligand>
        <name>5-amino-6-(D-ribitylamino)uracil</name>
        <dbReference type="ChEBI" id="CHEBI:15934"/>
    </ligand>
</feature>
<feature type="binding site" evidence="1">
    <location>
        <begin position="58"/>
        <end position="60"/>
    </location>
    <ligand>
        <name>5-amino-6-(D-ribitylamino)uracil</name>
        <dbReference type="ChEBI" id="CHEBI:15934"/>
    </ligand>
</feature>
<feature type="binding site" evidence="1">
    <location>
        <begin position="82"/>
        <end position="84"/>
    </location>
    <ligand>
        <name>5-amino-6-(D-ribitylamino)uracil</name>
        <dbReference type="ChEBI" id="CHEBI:15934"/>
    </ligand>
</feature>
<feature type="binding site" evidence="1">
    <location>
        <begin position="87"/>
        <end position="88"/>
    </location>
    <ligand>
        <name>(2S)-2-hydroxy-3-oxobutyl phosphate</name>
        <dbReference type="ChEBI" id="CHEBI:58830"/>
    </ligand>
</feature>
<feature type="binding site" evidence="1">
    <location>
        <position position="115"/>
    </location>
    <ligand>
        <name>5-amino-6-(D-ribitylamino)uracil</name>
        <dbReference type="ChEBI" id="CHEBI:15934"/>
    </ligand>
</feature>
<feature type="binding site" evidence="1">
    <location>
        <position position="129"/>
    </location>
    <ligand>
        <name>(2S)-2-hydroxy-3-oxobutyl phosphate</name>
        <dbReference type="ChEBI" id="CHEBI:58830"/>
    </ligand>
</feature>
<comment type="function">
    <text evidence="1">Catalyzes the formation of 6,7-dimethyl-8-ribityllumazine by condensation of 5-amino-6-(D-ribitylamino)uracil with 3,4-dihydroxy-2-butanone 4-phosphate. This is the penultimate step in the biosynthesis of riboflavin.</text>
</comment>
<comment type="catalytic activity">
    <reaction evidence="1">
        <text>(2S)-2-hydroxy-3-oxobutyl phosphate + 5-amino-6-(D-ribitylamino)uracil = 6,7-dimethyl-8-(1-D-ribityl)lumazine + phosphate + 2 H2O + H(+)</text>
        <dbReference type="Rhea" id="RHEA:26152"/>
        <dbReference type="ChEBI" id="CHEBI:15377"/>
        <dbReference type="ChEBI" id="CHEBI:15378"/>
        <dbReference type="ChEBI" id="CHEBI:15934"/>
        <dbReference type="ChEBI" id="CHEBI:43474"/>
        <dbReference type="ChEBI" id="CHEBI:58201"/>
        <dbReference type="ChEBI" id="CHEBI:58830"/>
        <dbReference type="EC" id="2.5.1.78"/>
    </reaction>
</comment>
<comment type="pathway">
    <text evidence="1">Cofactor biosynthesis; riboflavin biosynthesis; riboflavin from 2-hydroxy-3-oxobutyl phosphate and 5-amino-6-(D-ribitylamino)uracil: step 1/2.</text>
</comment>
<comment type="similarity">
    <text evidence="1">Belongs to the DMRL synthase family.</text>
</comment>
<organism>
    <name type="scientific">Burkholderia mallei (strain NCTC 10229)</name>
    <dbReference type="NCBI Taxonomy" id="412022"/>
    <lineage>
        <taxon>Bacteria</taxon>
        <taxon>Pseudomonadati</taxon>
        <taxon>Pseudomonadota</taxon>
        <taxon>Betaproteobacteria</taxon>
        <taxon>Burkholderiales</taxon>
        <taxon>Burkholderiaceae</taxon>
        <taxon>Burkholderia</taxon>
        <taxon>pseudomallei group</taxon>
    </lineage>
</organism>
<reference key="1">
    <citation type="journal article" date="2010" name="Genome Biol. Evol.">
        <title>Continuing evolution of Burkholderia mallei through genome reduction and large-scale rearrangements.</title>
        <authorList>
            <person name="Losada L."/>
            <person name="Ronning C.M."/>
            <person name="DeShazer D."/>
            <person name="Woods D."/>
            <person name="Fedorova N."/>
            <person name="Kim H.S."/>
            <person name="Shabalina S.A."/>
            <person name="Pearson T.R."/>
            <person name="Brinkac L."/>
            <person name="Tan P."/>
            <person name="Nandi T."/>
            <person name="Crabtree J."/>
            <person name="Badger J."/>
            <person name="Beckstrom-Sternberg S."/>
            <person name="Saqib M."/>
            <person name="Schutzer S.E."/>
            <person name="Keim P."/>
            <person name="Nierman W.C."/>
        </authorList>
    </citation>
    <scope>NUCLEOTIDE SEQUENCE [LARGE SCALE GENOMIC DNA]</scope>
    <source>
        <strain>NCTC 10229</strain>
    </source>
</reference>
<keyword id="KW-0686">Riboflavin biosynthesis</keyword>
<keyword id="KW-0808">Transferase</keyword>
<dbReference type="EC" id="2.5.1.78" evidence="1"/>
<dbReference type="EMBL" id="CP000546">
    <property type="protein sequence ID" value="ABN02746.1"/>
    <property type="molecule type" value="Genomic_DNA"/>
</dbReference>
<dbReference type="RefSeq" id="WP_004186056.1">
    <property type="nucleotide sequence ID" value="NC_008836.1"/>
</dbReference>
<dbReference type="SMR" id="A2S9D4"/>
<dbReference type="GeneID" id="93061204"/>
<dbReference type="KEGG" id="bml:BMA10229_A2596"/>
<dbReference type="HOGENOM" id="CLU_089358_1_2_4"/>
<dbReference type="UniPathway" id="UPA00275">
    <property type="reaction ID" value="UER00404"/>
</dbReference>
<dbReference type="Proteomes" id="UP000002283">
    <property type="component" value="Chromosome I"/>
</dbReference>
<dbReference type="GO" id="GO:0005829">
    <property type="term" value="C:cytosol"/>
    <property type="evidence" value="ECO:0007669"/>
    <property type="project" value="TreeGrafter"/>
</dbReference>
<dbReference type="GO" id="GO:0009349">
    <property type="term" value="C:riboflavin synthase complex"/>
    <property type="evidence" value="ECO:0007669"/>
    <property type="project" value="InterPro"/>
</dbReference>
<dbReference type="GO" id="GO:0000906">
    <property type="term" value="F:6,7-dimethyl-8-ribityllumazine synthase activity"/>
    <property type="evidence" value="ECO:0007669"/>
    <property type="project" value="UniProtKB-UniRule"/>
</dbReference>
<dbReference type="GO" id="GO:0009231">
    <property type="term" value="P:riboflavin biosynthetic process"/>
    <property type="evidence" value="ECO:0007669"/>
    <property type="project" value="UniProtKB-UniRule"/>
</dbReference>
<dbReference type="CDD" id="cd09209">
    <property type="entry name" value="Lumazine_synthase-I"/>
    <property type="match status" value="1"/>
</dbReference>
<dbReference type="Gene3D" id="3.40.50.960">
    <property type="entry name" value="Lumazine/riboflavin synthase"/>
    <property type="match status" value="1"/>
</dbReference>
<dbReference type="HAMAP" id="MF_00178">
    <property type="entry name" value="Lumazine_synth"/>
    <property type="match status" value="1"/>
</dbReference>
<dbReference type="InterPro" id="IPR034964">
    <property type="entry name" value="LS"/>
</dbReference>
<dbReference type="InterPro" id="IPR002180">
    <property type="entry name" value="LS/RS"/>
</dbReference>
<dbReference type="InterPro" id="IPR036467">
    <property type="entry name" value="LS/RS_sf"/>
</dbReference>
<dbReference type="NCBIfam" id="TIGR00114">
    <property type="entry name" value="lumazine-synth"/>
    <property type="match status" value="1"/>
</dbReference>
<dbReference type="PANTHER" id="PTHR21058:SF0">
    <property type="entry name" value="6,7-DIMETHYL-8-RIBITYLLUMAZINE SYNTHASE"/>
    <property type="match status" value="1"/>
</dbReference>
<dbReference type="PANTHER" id="PTHR21058">
    <property type="entry name" value="6,7-DIMETHYL-8-RIBITYLLUMAZINE SYNTHASE DMRL SYNTHASE LUMAZINE SYNTHASE"/>
    <property type="match status" value="1"/>
</dbReference>
<dbReference type="Pfam" id="PF00885">
    <property type="entry name" value="DMRL_synthase"/>
    <property type="match status" value="1"/>
</dbReference>
<dbReference type="SUPFAM" id="SSF52121">
    <property type="entry name" value="Lumazine synthase"/>
    <property type="match status" value="1"/>
</dbReference>
<gene>
    <name evidence="1" type="primary">ribH</name>
    <name type="ordered locus">BMA10229_A2596</name>
</gene>